<gene>
    <name type="ORF">AFUA_6G02800</name>
</gene>
<evidence type="ECO:0000255" key="1"/>
<evidence type="ECO:0000256" key="2">
    <source>
        <dbReference type="SAM" id="MobiDB-lite"/>
    </source>
</evidence>
<dbReference type="EMBL" id="AAHF01000012">
    <property type="protein sequence ID" value="EAL85759.1"/>
    <property type="molecule type" value="Genomic_DNA"/>
</dbReference>
<dbReference type="RefSeq" id="XP_747797.1">
    <property type="nucleotide sequence ID" value="XM_742704.1"/>
</dbReference>
<dbReference type="SMR" id="Q4WCX9"/>
<dbReference type="EnsemblFungi" id="EAL85759">
    <property type="protein sequence ID" value="EAL85759"/>
    <property type="gene ID" value="AFUA_6G02800"/>
</dbReference>
<dbReference type="GeneID" id="3505159"/>
<dbReference type="KEGG" id="afm:AFUA_6G02800"/>
<dbReference type="VEuPathDB" id="FungiDB:Afu6g02800"/>
<dbReference type="eggNOG" id="ENOG502S92W">
    <property type="taxonomic scope" value="Eukaryota"/>
</dbReference>
<dbReference type="HOGENOM" id="CLU_070647_2_0_1"/>
<dbReference type="InParanoid" id="Q4WCX9"/>
<dbReference type="OMA" id="CLPHVEI"/>
<dbReference type="OrthoDB" id="2146436at2759"/>
<dbReference type="Proteomes" id="UP000002530">
    <property type="component" value="Chromosome 6"/>
</dbReference>
<dbReference type="GO" id="GO:0009277">
    <property type="term" value="C:fungal-type cell wall"/>
    <property type="evidence" value="ECO:0000314"/>
    <property type="project" value="AspGD"/>
</dbReference>
<dbReference type="GO" id="GO:0005886">
    <property type="term" value="C:plasma membrane"/>
    <property type="evidence" value="ECO:0007669"/>
    <property type="project" value="UniProtKB-SubCell"/>
</dbReference>
<dbReference type="GO" id="GO:0098552">
    <property type="term" value="C:side of membrane"/>
    <property type="evidence" value="ECO:0007669"/>
    <property type="project" value="UniProtKB-KW"/>
</dbReference>
<dbReference type="GO" id="GO:0016740">
    <property type="term" value="F:transferase activity"/>
    <property type="evidence" value="ECO:0007669"/>
    <property type="project" value="UniProtKB-KW"/>
</dbReference>
<dbReference type="CDD" id="cd21176">
    <property type="entry name" value="LPMO_auxiliary-like"/>
    <property type="match status" value="1"/>
</dbReference>
<dbReference type="InterPro" id="IPR046936">
    <property type="entry name" value="BIM1-like"/>
</dbReference>
<dbReference type="InterPro" id="IPR046530">
    <property type="entry name" value="BIM1-like_dom"/>
</dbReference>
<dbReference type="PANTHER" id="PTHR34992:SF1">
    <property type="entry name" value="COPPER ACQUISITION FACTOR BIM1-LIKE DOMAIN-CONTAINING PROTEIN"/>
    <property type="match status" value="1"/>
</dbReference>
<dbReference type="PANTHER" id="PTHR34992">
    <property type="entry name" value="HYPHAL ANASTAMOSIS-7 PROTEIN"/>
    <property type="match status" value="1"/>
</dbReference>
<dbReference type="Pfam" id="PF20238">
    <property type="entry name" value="BIM1-like_dom"/>
    <property type="match status" value="1"/>
</dbReference>
<name>YA280_ASPFU</name>
<proteinExistence type="evidence at protein level"/>
<feature type="signal peptide" evidence="1">
    <location>
        <begin position="1"/>
        <end position="17"/>
    </location>
</feature>
<feature type="chain" id="PRO_0000245564" description="Uncharacterized protein AFUA_6G02800">
    <location>
        <begin position="18"/>
        <end position="218"/>
    </location>
</feature>
<feature type="propeptide" id="PRO_0000245565" description="Removed in mature form" evidence="1">
    <location>
        <begin position="219"/>
        <end position="242"/>
    </location>
</feature>
<feature type="region of interest" description="Disordered" evidence="2">
    <location>
        <begin position="176"/>
        <end position="214"/>
    </location>
</feature>
<feature type="compositionally biased region" description="Low complexity" evidence="2">
    <location>
        <begin position="180"/>
        <end position="214"/>
    </location>
</feature>
<feature type="lipid moiety-binding region" description="GPI-like-anchor amidated alanine" evidence="1">
    <location>
        <position position="218"/>
    </location>
</feature>
<feature type="glycosylation site" description="N-linked (GlcNAc...) asparagine" evidence="1">
    <location>
        <position position="47"/>
    </location>
</feature>
<feature type="glycosylation site" description="N-linked (GlcNAc...) asparagine" evidence="1">
    <location>
        <position position="86"/>
    </location>
</feature>
<feature type="glycosylation site" description="N-linked (GlcNAc...) asparagine" evidence="1">
    <location>
        <position position="122"/>
    </location>
</feature>
<feature type="glycosylation site" description="N-linked (GlcNAc...) asparagine" evidence="1">
    <location>
        <position position="159"/>
    </location>
</feature>
<feature type="glycosylation site" description="N-linked (GlcNAc...) asparagine" evidence="1">
    <location>
        <position position="178"/>
    </location>
</feature>
<comment type="subcellular location">
    <subcellularLocation>
        <location>Cell membrane</location>
        <topology>Lipid-anchor</topology>
        <topology>GPI-anchor</topology>
    </subcellularLocation>
</comment>
<comment type="PTM">
    <text>The GPI-like anchor contains a phosphoceramide lipid group. The anchor position has not been determined.</text>
</comment>
<sequence length="242" mass="24608">MKFSPAYLLAFAPIVAAHFRLQYPTSRGFNADTMANFPCGDLAQSSNRTQVSLSSGSFPVALRMGHDETAVEVLLALGNDPGTNFNITLHPTFRIEGLGEFCLPNVVFDESVLGTKITDGMNATLQVQSNGDPSGGLYACADIQFSTTAQDEKPSSCTNNTGISAIAFTGAAAERNANESTADGQAQSGSSGSSSDSGSHSGHSSATQTSSTTASSTAGAVALETAAWGILGAAVVGGLAVL</sequence>
<accession>Q4WCX9</accession>
<protein>
    <recommendedName>
        <fullName>Uncharacterized protein AFUA_6G02800</fullName>
    </recommendedName>
</protein>
<keyword id="KW-1003">Cell membrane</keyword>
<keyword id="KW-0903">Direct protein sequencing</keyword>
<keyword id="KW-0325">Glycoprotein</keyword>
<keyword id="KW-0336">GPI-anchor</keyword>
<keyword id="KW-0449">Lipoprotein</keyword>
<keyword id="KW-0472">Membrane</keyword>
<keyword id="KW-1185">Reference proteome</keyword>
<keyword id="KW-0732">Signal</keyword>
<keyword id="KW-0808">Transferase</keyword>
<reference key="1">
    <citation type="journal article" date="2005" name="Nature">
        <title>Genomic sequence of the pathogenic and allergenic filamentous fungus Aspergillus fumigatus.</title>
        <authorList>
            <person name="Nierman W.C."/>
            <person name="Pain A."/>
            <person name="Anderson M.J."/>
            <person name="Wortman J.R."/>
            <person name="Kim H.S."/>
            <person name="Arroyo J."/>
            <person name="Berriman M."/>
            <person name="Abe K."/>
            <person name="Archer D.B."/>
            <person name="Bermejo C."/>
            <person name="Bennett J.W."/>
            <person name="Bowyer P."/>
            <person name="Chen D."/>
            <person name="Collins M."/>
            <person name="Coulsen R."/>
            <person name="Davies R."/>
            <person name="Dyer P.S."/>
            <person name="Farman M.L."/>
            <person name="Fedorova N."/>
            <person name="Fedorova N.D."/>
            <person name="Feldblyum T.V."/>
            <person name="Fischer R."/>
            <person name="Fosker N."/>
            <person name="Fraser A."/>
            <person name="Garcia J.L."/>
            <person name="Garcia M.J."/>
            <person name="Goble A."/>
            <person name="Goldman G.H."/>
            <person name="Gomi K."/>
            <person name="Griffith-Jones S."/>
            <person name="Gwilliam R."/>
            <person name="Haas B.J."/>
            <person name="Haas H."/>
            <person name="Harris D.E."/>
            <person name="Horiuchi H."/>
            <person name="Huang J."/>
            <person name="Humphray S."/>
            <person name="Jimenez J."/>
            <person name="Keller N."/>
            <person name="Khouri H."/>
            <person name="Kitamoto K."/>
            <person name="Kobayashi T."/>
            <person name="Konzack S."/>
            <person name="Kulkarni R."/>
            <person name="Kumagai T."/>
            <person name="Lafton A."/>
            <person name="Latge J.-P."/>
            <person name="Li W."/>
            <person name="Lord A."/>
            <person name="Lu C."/>
            <person name="Majoros W.H."/>
            <person name="May G.S."/>
            <person name="Miller B.L."/>
            <person name="Mohamoud Y."/>
            <person name="Molina M."/>
            <person name="Monod M."/>
            <person name="Mouyna I."/>
            <person name="Mulligan S."/>
            <person name="Murphy L.D."/>
            <person name="O'Neil S."/>
            <person name="Paulsen I."/>
            <person name="Penalva M.A."/>
            <person name="Pertea M."/>
            <person name="Price C."/>
            <person name="Pritchard B.L."/>
            <person name="Quail M.A."/>
            <person name="Rabbinowitsch E."/>
            <person name="Rawlins N."/>
            <person name="Rajandream M.A."/>
            <person name="Reichard U."/>
            <person name="Renauld H."/>
            <person name="Robson G.D."/>
            <person name="Rodriguez de Cordoba S."/>
            <person name="Rodriguez-Pena J.M."/>
            <person name="Ronning C.M."/>
            <person name="Rutter S."/>
            <person name="Salzberg S.L."/>
            <person name="Sanchez M."/>
            <person name="Sanchez-Ferrero J.C."/>
            <person name="Saunders D."/>
            <person name="Seeger K."/>
            <person name="Squares R."/>
            <person name="Squares S."/>
            <person name="Takeuchi M."/>
            <person name="Tekaia F."/>
            <person name="Turner G."/>
            <person name="Vazquez de Aldana C.R."/>
            <person name="Weidman J."/>
            <person name="White O."/>
            <person name="Woodward J.R."/>
            <person name="Yu J.-H."/>
            <person name="Fraser C.M."/>
            <person name="Galagan J.E."/>
            <person name="Asai K."/>
            <person name="Machida M."/>
            <person name="Hall N."/>
            <person name="Barrell B.G."/>
            <person name="Denning D.W."/>
        </authorList>
    </citation>
    <scope>NUCLEOTIDE SEQUENCE [LARGE SCALE GENOMIC DNA]</scope>
    <source>
        <strain>ATCC MYA-4609 / CBS 101355 / FGSC A1100 / Af293</strain>
    </source>
</reference>
<reference key="2">
    <citation type="journal article" date="2001" name="Electrophoresis">
        <title>Proteome analysis of Aspergillus fumigatus identifies glycosylphosphatidylinositol-anchored proteins associated to the cell wall biosynthesis.</title>
        <authorList>
            <person name="Bruneau J.-M."/>
            <person name="Magnin T."/>
            <person name="Tagat E."/>
            <person name="Legrand R."/>
            <person name="Bernard M."/>
            <person name="Diaquin M."/>
            <person name="Fudali C."/>
            <person name="Latge J.-P."/>
        </authorList>
    </citation>
    <scope>PROTEIN SEQUENCE OF 21-27 AND 49-58</scope>
    <scope>GPI-ANCHOR</scope>
</reference>
<reference key="3">
    <citation type="journal article" date="2003" name="Glycobiology">
        <title>Structures of the glycosylphosphatidylinositol membrane anchors from Aspergillus fumigatus membrane proteins.</title>
        <authorList>
            <person name="Fontaine T."/>
            <person name="Magnin T."/>
            <person name="Melhert A."/>
            <person name="Lamont D."/>
            <person name="Latge J.-P."/>
            <person name="Ferguson M.A.J."/>
        </authorList>
    </citation>
    <scope>STRUCTURE OF GPI-ANCHOR</scope>
</reference>
<organism>
    <name type="scientific">Aspergillus fumigatus (strain ATCC MYA-4609 / CBS 101355 / FGSC A1100 / Af293)</name>
    <name type="common">Neosartorya fumigata</name>
    <dbReference type="NCBI Taxonomy" id="330879"/>
    <lineage>
        <taxon>Eukaryota</taxon>
        <taxon>Fungi</taxon>
        <taxon>Dikarya</taxon>
        <taxon>Ascomycota</taxon>
        <taxon>Pezizomycotina</taxon>
        <taxon>Eurotiomycetes</taxon>
        <taxon>Eurotiomycetidae</taxon>
        <taxon>Eurotiales</taxon>
        <taxon>Aspergillaceae</taxon>
        <taxon>Aspergillus</taxon>
        <taxon>Aspergillus subgen. Fumigati</taxon>
    </lineage>
</organism>